<dbReference type="EC" id="2.4.1.18" evidence="1"/>
<dbReference type="EMBL" id="AM233362">
    <property type="protein sequence ID" value="CAJ78923.1"/>
    <property type="molecule type" value="Genomic_DNA"/>
</dbReference>
<dbReference type="RefSeq" id="WP_011457385.1">
    <property type="nucleotide sequence ID" value="NZ_CP009694.1"/>
</dbReference>
<dbReference type="SMR" id="Q2A4U7"/>
<dbReference type="CAZy" id="CBM48">
    <property type="family name" value="Carbohydrate-Binding Module Family 48"/>
</dbReference>
<dbReference type="CAZy" id="GH13">
    <property type="family name" value="Glycoside Hydrolase Family 13"/>
</dbReference>
<dbReference type="KEGG" id="ftl:FTL_0483"/>
<dbReference type="UniPathway" id="UPA00164"/>
<dbReference type="Proteomes" id="UP000001944">
    <property type="component" value="Chromosome"/>
</dbReference>
<dbReference type="GO" id="GO:0005829">
    <property type="term" value="C:cytosol"/>
    <property type="evidence" value="ECO:0007669"/>
    <property type="project" value="TreeGrafter"/>
</dbReference>
<dbReference type="GO" id="GO:0003844">
    <property type="term" value="F:1,4-alpha-glucan branching enzyme activity"/>
    <property type="evidence" value="ECO:0007669"/>
    <property type="project" value="UniProtKB-UniRule"/>
</dbReference>
<dbReference type="GO" id="GO:0043169">
    <property type="term" value="F:cation binding"/>
    <property type="evidence" value="ECO:0007669"/>
    <property type="project" value="InterPro"/>
</dbReference>
<dbReference type="GO" id="GO:0004553">
    <property type="term" value="F:hydrolase activity, hydrolyzing O-glycosyl compounds"/>
    <property type="evidence" value="ECO:0007669"/>
    <property type="project" value="InterPro"/>
</dbReference>
<dbReference type="GO" id="GO:0005978">
    <property type="term" value="P:glycogen biosynthetic process"/>
    <property type="evidence" value="ECO:0007669"/>
    <property type="project" value="UniProtKB-UniRule"/>
</dbReference>
<dbReference type="CDD" id="cd11322">
    <property type="entry name" value="AmyAc_Glg_BE"/>
    <property type="match status" value="1"/>
</dbReference>
<dbReference type="CDD" id="cd02855">
    <property type="entry name" value="E_set_GBE_prok_N"/>
    <property type="match status" value="1"/>
</dbReference>
<dbReference type="FunFam" id="2.60.40.1180:FF:000002">
    <property type="entry name" value="1,4-alpha-glucan branching enzyme GlgB"/>
    <property type="match status" value="1"/>
</dbReference>
<dbReference type="FunFam" id="3.20.20.80:FF:000003">
    <property type="entry name" value="1,4-alpha-glucan branching enzyme GlgB"/>
    <property type="match status" value="1"/>
</dbReference>
<dbReference type="Gene3D" id="3.20.20.80">
    <property type="entry name" value="Glycosidases"/>
    <property type="match status" value="1"/>
</dbReference>
<dbReference type="Gene3D" id="2.60.40.1180">
    <property type="entry name" value="Golgi alpha-mannosidase II"/>
    <property type="match status" value="1"/>
</dbReference>
<dbReference type="Gene3D" id="2.60.40.10">
    <property type="entry name" value="Immunoglobulins"/>
    <property type="match status" value="1"/>
</dbReference>
<dbReference type="HAMAP" id="MF_00685">
    <property type="entry name" value="GlgB"/>
    <property type="match status" value="1"/>
</dbReference>
<dbReference type="InterPro" id="IPR006048">
    <property type="entry name" value="A-amylase/branching_C"/>
</dbReference>
<dbReference type="InterPro" id="IPR037439">
    <property type="entry name" value="Branching_enzy"/>
</dbReference>
<dbReference type="InterPro" id="IPR006407">
    <property type="entry name" value="GlgB"/>
</dbReference>
<dbReference type="InterPro" id="IPR044143">
    <property type="entry name" value="GlgB_N_E_set_prok"/>
</dbReference>
<dbReference type="InterPro" id="IPR006047">
    <property type="entry name" value="Glyco_hydro_13_cat_dom"/>
</dbReference>
<dbReference type="InterPro" id="IPR004193">
    <property type="entry name" value="Glyco_hydro_13_N"/>
</dbReference>
<dbReference type="InterPro" id="IPR013780">
    <property type="entry name" value="Glyco_hydro_b"/>
</dbReference>
<dbReference type="InterPro" id="IPR017853">
    <property type="entry name" value="Glycoside_hydrolase_SF"/>
</dbReference>
<dbReference type="InterPro" id="IPR013783">
    <property type="entry name" value="Ig-like_fold"/>
</dbReference>
<dbReference type="InterPro" id="IPR014756">
    <property type="entry name" value="Ig_E-set"/>
</dbReference>
<dbReference type="NCBIfam" id="TIGR01515">
    <property type="entry name" value="branching_enzym"/>
    <property type="match status" value="1"/>
</dbReference>
<dbReference type="NCBIfam" id="NF003811">
    <property type="entry name" value="PRK05402.1"/>
    <property type="match status" value="1"/>
</dbReference>
<dbReference type="NCBIfam" id="NF008967">
    <property type="entry name" value="PRK12313.1"/>
    <property type="match status" value="1"/>
</dbReference>
<dbReference type="PANTHER" id="PTHR43651">
    <property type="entry name" value="1,4-ALPHA-GLUCAN-BRANCHING ENZYME"/>
    <property type="match status" value="1"/>
</dbReference>
<dbReference type="PANTHER" id="PTHR43651:SF3">
    <property type="entry name" value="1,4-ALPHA-GLUCAN-BRANCHING ENZYME"/>
    <property type="match status" value="1"/>
</dbReference>
<dbReference type="Pfam" id="PF00128">
    <property type="entry name" value="Alpha-amylase"/>
    <property type="match status" value="2"/>
</dbReference>
<dbReference type="Pfam" id="PF02806">
    <property type="entry name" value="Alpha-amylase_C"/>
    <property type="match status" value="1"/>
</dbReference>
<dbReference type="Pfam" id="PF02922">
    <property type="entry name" value="CBM_48"/>
    <property type="match status" value="1"/>
</dbReference>
<dbReference type="PIRSF" id="PIRSF000463">
    <property type="entry name" value="GlgB"/>
    <property type="match status" value="1"/>
</dbReference>
<dbReference type="SMART" id="SM00642">
    <property type="entry name" value="Aamy"/>
    <property type="match status" value="1"/>
</dbReference>
<dbReference type="SUPFAM" id="SSF51445">
    <property type="entry name" value="(Trans)glycosidases"/>
    <property type="match status" value="1"/>
</dbReference>
<dbReference type="SUPFAM" id="SSF81296">
    <property type="entry name" value="E set domains"/>
    <property type="match status" value="1"/>
</dbReference>
<dbReference type="SUPFAM" id="SSF51011">
    <property type="entry name" value="Glycosyl hydrolase domain"/>
    <property type="match status" value="1"/>
</dbReference>
<evidence type="ECO:0000255" key="1">
    <source>
        <dbReference type="HAMAP-Rule" id="MF_00685"/>
    </source>
</evidence>
<sequence>MKNKNSEQNTHYTIGEQDIHYFHEGKHIYAYEFMGAHKACEEGIEGIRFTTWAPNAKSICVIGDFNYWQVEDKNYMEPITDAGLWSVFIPNAKNGDKYKFVVTNKDTSHYVYKSDPYAFFSELRPNTASIITTETQYTWSDDKWLEKRAKTNYYDNPMNVYELHLASWKTKNGKFLTYDELSETLPQYIKEMGYTHVEFMPLHEHPLDASWGYQPTGFYSVNSRHGDIIGLKRLVDKLHNNDIGVILDWVPGHFCKDQHGLIYFDGSPCYEYQEPTKAINKGWETHNFDLGRNEVKCFLISNAMYWINEFHIDGLRVDAVSNILYLNYDREDGQWIPNIYGGHENLEGIAFLKELNGVLKHTCKGVITIAEESSSWPDISTPVEKGGLGFDFKWNMGWMNDTLRYISLDPVYRKYHHNLITFSMVYHYSEKFILSISHDEVVHGKKSLINKMWGDLWNKYAGLRLYMSYMIGHPGKKLIFMGSEFVQFVEWREYEQLQWQVVDQYESHKQTLHFFKKLNDFYHNETALWQCDYDHHGFRWIDANNSQQSILSFIRSSKDNKQKLIFICNFTPVTYYDYHLGVPDAGSYKEVFNSDNLEFGGSGQVMATEIFSSPQSSHGFEQRIIIKIPPMATLVLKLIK</sequence>
<organism>
    <name type="scientific">Francisella tularensis subsp. holarctica (strain LVS)</name>
    <dbReference type="NCBI Taxonomy" id="376619"/>
    <lineage>
        <taxon>Bacteria</taxon>
        <taxon>Pseudomonadati</taxon>
        <taxon>Pseudomonadota</taxon>
        <taxon>Gammaproteobacteria</taxon>
        <taxon>Thiotrichales</taxon>
        <taxon>Francisellaceae</taxon>
        <taxon>Francisella</taxon>
    </lineage>
</organism>
<proteinExistence type="inferred from homology"/>
<accession>Q2A4U7</accession>
<reference key="1">
    <citation type="submission" date="2006-03" db="EMBL/GenBank/DDBJ databases">
        <title>Complete genome sequence of Francisella tularensis LVS (Live Vaccine Strain).</title>
        <authorList>
            <person name="Chain P."/>
            <person name="Larimer F."/>
            <person name="Land M."/>
            <person name="Stilwagen S."/>
            <person name="Larsson P."/>
            <person name="Bearden S."/>
            <person name="Chu M."/>
            <person name="Oyston P."/>
            <person name="Forsman M."/>
            <person name="Andersson S."/>
            <person name="Lindler L."/>
            <person name="Titball R."/>
            <person name="Garcia E."/>
        </authorList>
    </citation>
    <scope>NUCLEOTIDE SEQUENCE [LARGE SCALE GENOMIC DNA]</scope>
    <source>
        <strain>LVS</strain>
    </source>
</reference>
<protein>
    <recommendedName>
        <fullName evidence="1">1,4-alpha-glucan branching enzyme GlgB</fullName>
        <ecNumber evidence="1">2.4.1.18</ecNumber>
    </recommendedName>
    <alternativeName>
        <fullName evidence="1">1,4-alpha-D-glucan:1,4-alpha-D-glucan 6-glucosyl-transferase</fullName>
    </alternativeName>
    <alternativeName>
        <fullName evidence="1">Alpha-(1-&gt;4)-glucan branching enzyme</fullName>
    </alternativeName>
    <alternativeName>
        <fullName evidence="1">Glycogen branching enzyme</fullName>
        <shortName evidence="1">BE</shortName>
    </alternativeName>
</protein>
<comment type="function">
    <text evidence="1">Catalyzes the formation of the alpha-1,6-glucosidic linkages in glycogen by scission of a 1,4-alpha-linked oligosaccharide from growing alpha-1,4-glucan chains and the subsequent attachment of the oligosaccharide to the alpha-1,6 position.</text>
</comment>
<comment type="catalytic activity">
    <reaction evidence="1">
        <text>Transfers a segment of a (1-&gt;4)-alpha-D-glucan chain to a primary hydroxy group in a similar glucan chain.</text>
        <dbReference type="EC" id="2.4.1.18"/>
    </reaction>
</comment>
<comment type="pathway">
    <text evidence="1">Glycan biosynthesis; glycogen biosynthesis.</text>
</comment>
<comment type="subunit">
    <text evidence="1">Monomer.</text>
</comment>
<comment type="similarity">
    <text evidence="1">Belongs to the glycosyl hydrolase 13 family. GlgB subfamily.</text>
</comment>
<name>GLGB_FRATH</name>
<feature type="chain" id="PRO_0000260655" description="1,4-alpha-glucan branching enzyme GlgB">
    <location>
        <begin position="1"/>
        <end position="640"/>
    </location>
</feature>
<feature type="active site" description="Nucleophile" evidence="1">
    <location>
        <position position="318"/>
    </location>
</feature>
<feature type="active site" description="Proton donor" evidence="1">
    <location>
        <position position="371"/>
    </location>
</feature>
<keyword id="KW-0119">Carbohydrate metabolism</keyword>
<keyword id="KW-0320">Glycogen biosynthesis</keyword>
<keyword id="KW-0321">Glycogen metabolism</keyword>
<keyword id="KW-0328">Glycosyltransferase</keyword>
<keyword id="KW-1185">Reference proteome</keyword>
<keyword id="KW-0808">Transferase</keyword>
<gene>
    <name evidence="1" type="primary">glgB</name>
    <name type="ordered locus">FTL_0483</name>
</gene>